<reference key="1">
    <citation type="submission" date="2008-05" db="EMBL/GenBank/DDBJ databases">
        <title>Genome sequence of Clostridium botulinum Ba4 strain 657.</title>
        <authorList>
            <person name="Shrivastava S."/>
            <person name="Brown J.L."/>
            <person name="Bruce D."/>
            <person name="Detter C."/>
            <person name="Munk C."/>
            <person name="Smith L.A."/>
            <person name="Smith T.J."/>
            <person name="Sutton G."/>
            <person name="Brettin T.S."/>
        </authorList>
    </citation>
    <scope>NUCLEOTIDE SEQUENCE [LARGE SCALE GENOMIC DNA]</scope>
    <source>
        <strain>657 / Type Ba4</strain>
    </source>
</reference>
<dbReference type="EMBL" id="CP001083">
    <property type="protein sequence ID" value="ACQ54210.1"/>
    <property type="molecule type" value="Genomic_DNA"/>
</dbReference>
<dbReference type="RefSeq" id="WP_003362574.1">
    <property type="nucleotide sequence ID" value="NC_012658.1"/>
</dbReference>
<dbReference type="SMR" id="C3L0C9"/>
<dbReference type="KEGG" id="cbi:CLJ_B2656"/>
<dbReference type="HOGENOM" id="CLU_073981_2_0_9"/>
<dbReference type="Proteomes" id="UP000002333">
    <property type="component" value="Chromosome"/>
</dbReference>
<dbReference type="GO" id="GO:0005737">
    <property type="term" value="C:cytoplasm"/>
    <property type="evidence" value="ECO:0007669"/>
    <property type="project" value="UniProtKB-SubCell"/>
</dbReference>
<dbReference type="GO" id="GO:0043023">
    <property type="term" value="F:ribosomal large subunit binding"/>
    <property type="evidence" value="ECO:0007669"/>
    <property type="project" value="TreeGrafter"/>
</dbReference>
<dbReference type="GO" id="GO:0006415">
    <property type="term" value="P:translational termination"/>
    <property type="evidence" value="ECO:0007669"/>
    <property type="project" value="UniProtKB-UniRule"/>
</dbReference>
<dbReference type="CDD" id="cd00520">
    <property type="entry name" value="RRF"/>
    <property type="match status" value="1"/>
</dbReference>
<dbReference type="FunFam" id="1.10.132.20:FF:000001">
    <property type="entry name" value="Ribosome-recycling factor"/>
    <property type="match status" value="1"/>
</dbReference>
<dbReference type="FunFam" id="3.30.1360.40:FF:000001">
    <property type="entry name" value="Ribosome-recycling factor"/>
    <property type="match status" value="1"/>
</dbReference>
<dbReference type="Gene3D" id="3.30.1360.40">
    <property type="match status" value="1"/>
</dbReference>
<dbReference type="Gene3D" id="1.10.132.20">
    <property type="entry name" value="Ribosome-recycling factor"/>
    <property type="match status" value="1"/>
</dbReference>
<dbReference type="HAMAP" id="MF_00040">
    <property type="entry name" value="RRF"/>
    <property type="match status" value="1"/>
</dbReference>
<dbReference type="InterPro" id="IPR002661">
    <property type="entry name" value="Ribosome_recyc_fac"/>
</dbReference>
<dbReference type="InterPro" id="IPR023584">
    <property type="entry name" value="Ribosome_recyc_fac_dom"/>
</dbReference>
<dbReference type="InterPro" id="IPR036191">
    <property type="entry name" value="RRF_sf"/>
</dbReference>
<dbReference type="NCBIfam" id="TIGR00496">
    <property type="entry name" value="frr"/>
    <property type="match status" value="1"/>
</dbReference>
<dbReference type="PANTHER" id="PTHR20982:SF3">
    <property type="entry name" value="MITOCHONDRIAL RIBOSOME RECYCLING FACTOR PSEUDO 1"/>
    <property type="match status" value="1"/>
</dbReference>
<dbReference type="PANTHER" id="PTHR20982">
    <property type="entry name" value="RIBOSOME RECYCLING FACTOR"/>
    <property type="match status" value="1"/>
</dbReference>
<dbReference type="Pfam" id="PF01765">
    <property type="entry name" value="RRF"/>
    <property type="match status" value="1"/>
</dbReference>
<dbReference type="SUPFAM" id="SSF55194">
    <property type="entry name" value="Ribosome recycling factor, RRF"/>
    <property type="match status" value="1"/>
</dbReference>
<accession>C3L0C9</accession>
<keyword id="KW-0963">Cytoplasm</keyword>
<keyword id="KW-0648">Protein biosynthesis</keyword>
<evidence type="ECO:0000255" key="1">
    <source>
        <dbReference type="HAMAP-Rule" id="MF_00040"/>
    </source>
</evidence>
<sequence>MIKEILKKADEKMGKTIVALKRELASMKAGRANPAMLDRIEAEYYGSMTPLNQLGNISVPEARVLLIQPWDKSALSAIEKAILKSDLGLNPSNDGTVIRLVIPELTEETRKNIVKTVKKTGEEAKVAIRSIRRDCNDDVKNLKKDDVSEDDIKKAEDDIQKKTDKYIKEIDSIISAKEKEILSI</sequence>
<gene>
    <name evidence="1" type="primary">frr</name>
    <name type="ordered locus">CLJ_B2656</name>
</gene>
<feature type="chain" id="PRO_1000202091" description="Ribosome-recycling factor">
    <location>
        <begin position="1"/>
        <end position="184"/>
    </location>
</feature>
<name>RRF_CLOB6</name>
<comment type="function">
    <text evidence="1">Responsible for the release of ribosomes from messenger RNA at the termination of protein biosynthesis. May increase the efficiency of translation by recycling ribosomes from one round of translation to another.</text>
</comment>
<comment type="subcellular location">
    <subcellularLocation>
        <location evidence="1">Cytoplasm</location>
    </subcellularLocation>
</comment>
<comment type="similarity">
    <text evidence="1">Belongs to the RRF family.</text>
</comment>
<protein>
    <recommendedName>
        <fullName evidence="1">Ribosome-recycling factor</fullName>
        <shortName evidence="1">RRF</shortName>
    </recommendedName>
    <alternativeName>
        <fullName evidence="1">Ribosome-releasing factor</fullName>
    </alternativeName>
</protein>
<proteinExistence type="inferred from homology"/>
<organism>
    <name type="scientific">Clostridium botulinum (strain 657 / Type Ba4)</name>
    <dbReference type="NCBI Taxonomy" id="515621"/>
    <lineage>
        <taxon>Bacteria</taxon>
        <taxon>Bacillati</taxon>
        <taxon>Bacillota</taxon>
        <taxon>Clostridia</taxon>
        <taxon>Eubacteriales</taxon>
        <taxon>Clostridiaceae</taxon>
        <taxon>Clostridium</taxon>
    </lineage>
</organism>